<gene>
    <name evidence="1" type="primary">mdtG</name>
    <name type="ordered locus">EC55989_1167</name>
</gene>
<comment type="function">
    <text evidence="1">Confers resistance to fosfomycin and deoxycholate.</text>
</comment>
<comment type="subcellular location">
    <subcellularLocation>
        <location evidence="1">Cell inner membrane</location>
        <topology evidence="1">Multi-pass membrane protein</topology>
    </subcellularLocation>
</comment>
<comment type="similarity">
    <text evidence="1">Belongs to the major facilitator superfamily. DHA1 family. MdtG (TC 2.A.1.2.20) subfamily.</text>
</comment>
<dbReference type="EMBL" id="CU928145">
    <property type="protein sequence ID" value="CAU97026.1"/>
    <property type="molecule type" value="Genomic_DNA"/>
</dbReference>
<dbReference type="RefSeq" id="WP_000074181.1">
    <property type="nucleotide sequence ID" value="NC_011748.1"/>
</dbReference>
<dbReference type="SMR" id="B7LFG4"/>
<dbReference type="KEGG" id="eck:EC55989_1167"/>
<dbReference type="HOGENOM" id="CLU_001265_57_3_6"/>
<dbReference type="Proteomes" id="UP000000746">
    <property type="component" value="Chromosome"/>
</dbReference>
<dbReference type="GO" id="GO:0005886">
    <property type="term" value="C:plasma membrane"/>
    <property type="evidence" value="ECO:0007669"/>
    <property type="project" value="UniProtKB-SubCell"/>
</dbReference>
<dbReference type="GO" id="GO:0022857">
    <property type="term" value="F:transmembrane transporter activity"/>
    <property type="evidence" value="ECO:0007669"/>
    <property type="project" value="UniProtKB-UniRule"/>
</dbReference>
<dbReference type="GO" id="GO:0046677">
    <property type="term" value="P:response to antibiotic"/>
    <property type="evidence" value="ECO:0007669"/>
    <property type="project" value="UniProtKB-KW"/>
</dbReference>
<dbReference type="CDD" id="cd17391">
    <property type="entry name" value="MFS_MdtG_MDR_like"/>
    <property type="match status" value="1"/>
</dbReference>
<dbReference type="FunFam" id="1.20.1250.20:FF:000020">
    <property type="entry name" value="Multidrug resistance protein MdtG"/>
    <property type="match status" value="1"/>
</dbReference>
<dbReference type="FunFam" id="1.20.1250.20:FF:000022">
    <property type="entry name" value="Multidrug resistance protein MdtG"/>
    <property type="match status" value="1"/>
</dbReference>
<dbReference type="Gene3D" id="1.20.1250.20">
    <property type="entry name" value="MFS general substrate transporter like domains"/>
    <property type="match status" value="2"/>
</dbReference>
<dbReference type="HAMAP" id="MF_01528">
    <property type="entry name" value="MFS_MdtG"/>
    <property type="match status" value="1"/>
</dbReference>
<dbReference type="InterPro" id="IPR011701">
    <property type="entry name" value="MFS"/>
</dbReference>
<dbReference type="InterPro" id="IPR020846">
    <property type="entry name" value="MFS_dom"/>
</dbReference>
<dbReference type="InterPro" id="IPR050497">
    <property type="entry name" value="MFS_MdtG_subfamily"/>
</dbReference>
<dbReference type="InterPro" id="IPR036259">
    <property type="entry name" value="MFS_trans_sf"/>
</dbReference>
<dbReference type="InterPro" id="IPR023692">
    <property type="entry name" value="Mutidrug-R_MdtG"/>
</dbReference>
<dbReference type="InterPro" id="IPR001958">
    <property type="entry name" value="Tet-R_TetA/multi-R_MdtG-like"/>
</dbReference>
<dbReference type="NCBIfam" id="NF007372">
    <property type="entry name" value="PRK09874.1"/>
    <property type="match status" value="1"/>
</dbReference>
<dbReference type="PANTHER" id="PTHR43414">
    <property type="entry name" value="MULTIDRUG RESISTANCE PROTEIN MDTG"/>
    <property type="match status" value="1"/>
</dbReference>
<dbReference type="PANTHER" id="PTHR43414:SF6">
    <property type="entry name" value="MULTIDRUG RESISTANCE PROTEIN MDTG"/>
    <property type="match status" value="1"/>
</dbReference>
<dbReference type="Pfam" id="PF07690">
    <property type="entry name" value="MFS_1"/>
    <property type="match status" value="1"/>
</dbReference>
<dbReference type="PRINTS" id="PR01035">
    <property type="entry name" value="TCRTETA"/>
</dbReference>
<dbReference type="SUPFAM" id="SSF103473">
    <property type="entry name" value="MFS general substrate transporter"/>
    <property type="match status" value="1"/>
</dbReference>
<dbReference type="PROSITE" id="PS50850">
    <property type="entry name" value="MFS"/>
    <property type="match status" value="1"/>
</dbReference>
<accession>B7LFG4</accession>
<name>MDTG_ECO55</name>
<proteinExistence type="inferred from homology"/>
<reference key="1">
    <citation type="journal article" date="2009" name="PLoS Genet.">
        <title>Organised genome dynamics in the Escherichia coli species results in highly diverse adaptive paths.</title>
        <authorList>
            <person name="Touchon M."/>
            <person name="Hoede C."/>
            <person name="Tenaillon O."/>
            <person name="Barbe V."/>
            <person name="Baeriswyl S."/>
            <person name="Bidet P."/>
            <person name="Bingen E."/>
            <person name="Bonacorsi S."/>
            <person name="Bouchier C."/>
            <person name="Bouvet O."/>
            <person name="Calteau A."/>
            <person name="Chiapello H."/>
            <person name="Clermont O."/>
            <person name="Cruveiller S."/>
            <person name="Danchin A."/>
            <person name="Diard M."/>
            <person name="Dossat C."/>
            <person name="Karoui M.E."/>
            <person name="Frapy E."/>
            <person name="Garry L."/>
            <person name="Ghigo J.M."/>
            <person name="Gilles A.M."/>
            <person name="Johnson J."/>
            <person name="Le Bouguenec C."/>
            <person name="Lescat M."/>
            <person name="Mangenot S."/>
            <person name="Martinez-Jehanne V."/>
            <person name="Matic I."/>
            <person name="Nassif X."/>
            <person name="Oztas S."/>
            <person name="Petit M.A."/>
            <person name="Pichon C."/>
            <person name="Rouy Z."/>
            <person name="Ruf C.S."/>
            <person name="Schneider D."/>
            <person name="Tourret J."/>
            <person name="Vacherie B."/>
            <person name="Vallenet D."/>
            <person name="Medigue C."/>
            <person name="Rocha E.P.C."/>
            <person name="Denamur E."/>
        </authorList>
    </citation>
    <scope>NUCLEOTIDE SEQUENCE [LARGE SCALE GENOMIC DNA]</scope>
    <source>
        <strain>55989 / EAEC</strain>
    </source>
</reference>
<evidence type="ECO:0000255" key="1">
    <source>
        <dbReference type="HAMAP-Rule" id="MF_01528"/>
    </source>
</evidence>
<protein>
    <recommendedName>
        <fullName evidence="1">Multidrug resistance protein MdtG</fullName>
    </recommendedName>
</protein>
<keyword id="KW-0046">Antibiotic resistance</keyword>
<keyword id="KW-0997">Cell inner membrane</keyword>
<keyword id="KW-1003">Cell membrane</keyword>
<keyword id="KW-0472">Membrane</keyword>
<keyword id="KW-1185">Reference proteome</keyword>
<keyword id="KW-0812">Transmembrane</keyword>
<keyword id="KW-1133">Transmembrane helix</keyword>
<keyword id="KW-0813">Transport</keyword>
<feature type="chain" id="PRO_1000185160" description="Multidrug resistance protein MdtG">
    <location>
        <begin position="1"/>
        <end position="408"/>
    </location>
</feature>
<feature type="transmembrane region" description="Helical" evidence="1">
    <location>
        <begin position="16"/>
        <end position="36"/>
    </location>
</feature>
<feature type="transmembrane region" description="Helical" evidence="1">
    <location>
        <begin position="58"/>
        <end position="78"/>
    </location>
</feature>
<feature type="transmembrane region" description="Helical" evidence="1">
    <location>
        <begin position="92"/>
        <end position="112"/>
    </location>
</feature>
<feature type="transmembrane region" description="Helical" evidence="1">
    <location>
        <begin position="115"/>
        <end position="135"/>
    </location>
</feature>
<feature type="transmembrane region" description="Helical" evidence="1">
    <location>
        <begin position="146"/>
        <end position="166"/>
    </location>
</feature>
<feature type="transmembrane region" description="Helical" evidence="1">
    <location>
        <begin position="173"/>
        <end position="193"/>
    </location>
</feature>
<feature type="transmembrane region" description="Helical" evidence="1">
    <location>
        <begin position="224"/>
        <end position="244"/>
    </location>
</feature>
<feature type="transmembrane region" description="Helical" evidence="1">
    <location>
        <begin position="256"/>
        <end position="276"/>
    </location>
</feature>
<feature type="transmembrane region" description="Helical" evidence="1">
    <location>
        <begin position="290"/>
        <end position="310"/>
    </location>
</feature>
<feature type="transmembrane region" description="Helical" evidence="1">
    <location>
        <begin position="319"/>
        <end position="339"/>
    </location>
</feature>
<feature type="transmembrane region" description="Helical" evidence="1">
    <location>
        <begin position="378"/>
        <end position="398"/>
    </location>
</feature>
<organism>
    <name type="scientific">Escherichia coli (strain 55989 / EAEC)</name>
    <dbReference type="NCBI Taxonomy" id="585055"/>
    <lineage>
        <taxon>Bacteria</taxon>
        <taxon>Pseudomonadati</taxon>
        <taxon>Pseudomonadota</taxon>
        <taxon>Gammaproteobacteria</taxon>
        <taxon>Enterobacterales</taxon>
        <taxon>Enterobacteriaceae</taxon>
        <taxon>Escherichia</taxon>
    </lineage>
</organism>
<sequence length="408" mass="43883">MSPCENDTPINWKRNLIVAWLGCFLTGAAFSLVMPFLPLYVEQLGVTGHSALNMWSGIVFSITFLFSSIASPFWGGLADRKGRKLMLLRSALGMGIVMVLMGLAQNIWQFLILRALLGLLGGFVPNANALIATQVPRNKSGWALGTLSTGGVSGALLGPMAGGLLADSYGLRPVFFITASVLILCFFVTLFCIREKFQPVSKKEMLHMREVVTSLKNPKLVLSLFVTTLIIQVATGSIAPILTLYVRELAGNVSNVAFISGMIASVPGVAALLSAPRLGKLGDRIGPEKILITALIFSVLLLIPMSYVQTPLQLGILRFLLGAADGALLPAVQTLLVYNSSNQIAGRIFSYNQSFRDIGNVTGPLMGAAISANYGFRAVFLVTAGVVLFNAVYSWNSLRRRRIPQVSN</sequence>